<keyword id="KW-0175">Coiled coil</keyword>
<keyword id="KW-0256">Endoplasmic reticulum</keyword>
<keyword id="KW-0342">GTP-binding</keyword>
<keyword id="KW-0378">Hydrolase</keyword>
<keyword id="KW-0472">Membrane</keyword>
<keyword id="KW-0547">Nucleotide-binding</keyword>
<keyword id="KW-1185">Reference proteome</keyword>
<keyword id="KW-0812">Transmembrane</keyword>
<keyword id="KW-1133">Transmembrane helix</keyword>
<protein>
    <recommendedName>
        <fullName evidence="1">Protein sey1</fullName>
        <ecNumber evidence="1">3.6.5.-</ecNumber>
    </recommendedName>
</protein>
<comment type="function">
    <text evidence="1">Cooperates with the reticulon proteins and tubule-shaping DP1 family proteins to generate and maintain the structure of the tubular endoplasmic reticulum network. Has GTPase activity, which is required for its function in ER organization.</text>
</comment>
<comment type="subcellular location">
    <subcellularLocation>
        <location evidence="1">Endoplasmic reticulum membrane</location>
        <topology evidence="1">Multi-pass membrane protein</topology>
    </subcellularLocation>
    <text evidence="1">Enriched in the cortical ER. Concentrated in punctae along the ER tubules.</text>
</comment>
<comment type="similarity">
    <text evidence="2">Belongs to the TRAFAC class dynamin-like GTPase superfamily. GB1/RHD3 GTPase family. RHD3 subfamily.</text>
</comment>
<comment type="sequence caution" evidence="4">
    <conflict type="erroneous gene model prediction">
        <sequence resource="EMBL-CDS" id="BAE56859"/>
    </conflict>
</comment>
<organism>
    <name type="scientific">Aspergillus oryzae (strain ATCC 42149 / RIB 40)</name>
    <name type="common">Yellow koji mold</name>
    <dbReference type="NCBI Taxonomy" id="510516"/>
    <lineage>
        <taxon>Eukaryota</taxon>
        <taxon>Fungi</taxon>
        <taxon>Dikarya</taxon>
        <taxon>Ascomycota</taxon>
        <taxon>Pezizomycotina</taxon>
        <taxon>Eurotiomycetes</taxon>
        <taxon>Eurotiomycetidae</taxon>
        <taxon>Eurotiales</taxon>
        <taxon>Aspergillaceae</taxon>
        <taxon>Aspergillus</taxon>
        <taxon>Aspergillus subgen. Circumdati</taxon>
    </lineage>
</organism>
<evidence type="ECO:0000255" key="1">
    <source>
        <dbReference type="HAMAP-Rule" id="MF_03109"/>
    </source>
</evidence>
<evidence type="ECO:0000255" key="2">
    <source>
        <dbReference type="PROSITE-ProRule" id="PRU01052"/>
    </source>
</evidence>
<evidence type="ECO:0000256" key="3">
    <source>
        <dbReference type="SAM" id="MobiDB-lite"/>
    </source>
</evidence>
<evidence type="ECO:0000305" key="4"/>
<proteinExistence type="inferred from homology"/>
<dbReference type="EC" id="3.6.5.-" evidence="1"/>
<dbReference type="EMBL" id="BA000050">
    <property type="protein sequence ID" value="BAE56859.1"/>
    <property type="status" value="ALT_SEQ"/>
    <property type="molecule type" value="Genomic_DNA"/>
</dbReference>
<dbReference type="SMR" id="Q2UNK6"/>
<dbReference type="STRING" id="510516.Q2UNK6"/>
<dbReference type="Proteomes" id="UP000006564">
    <property type="component" value="Chromosome 2"/>
</dbReference>
<dbReference type="GO" id="GO:0005789">
    <property type="term" value="C:endoplasmic reticulum membrane"/>
    <property type="evidence" value="ECO:0007669"/>
    <property type="project" value="UniProtKB-SubCell"/>
</dbReference>
<dbReference type="GO" id="GO:0005525">
    <property type="term" value="F:GTP binding"/>
    <property type="evidence" value="ECO:0007669"/>
    <property type="project" value="UniProtKB-UniRule"/>
</dbReference>
<dbReference type="GO" id="GO:0003924">
    <property type="term" value="F:GTPase activity"/>
    <property type="evidence" value="ECO:0007669"/>
    <property type="project" value="UniProtKB-UniRule"/>
</dbReference>
<dbReference type="GO" id="GO:0016320">
    <property type="term" value="P:endoplasmic reticulum membrane fusion"/>
    <property type="evidence" value="ECO:0007669"/>
    <property type="project" value="TreeGrafter"/>
</dbReference>
<dbReference type="CDD" id="cd01851">
    <property type="entry name" value="GBP"/>
    <property type="match status" value="1"/>
</dbReference>
<dbReference type="FunFam" id="3.40.50.300:FF:000727">
    <property type="entry name" value="Protein SEY1 homolog"/>
    <property type="match status" value="1"/>
</dbReference>
<dbReference type="Gene3D" id="3.40.50.300">
    <property type="entry name" value="P-loop containing nucleotide triphosphate hydrolases"/>
    <property type="match status" value="1"/>
</dbReference>
<dbReference type="HAMAP" id="MF_03109">
    <property type="entry name" value="Sey1"/>
    <property type="match status" value="1"/>
</dbReference>
<dbReference type="InterPro" id="IPR030386">
    <property type="entry name" value="G_GB1_RHD3_dom"/>
</dbReference>
<dbReference type="InterPro" id="IPR027417">
    <property type="entry name" value="P-loop_NTPase"/>
</dbReference>
<dbReference type="InterPro" id="IPR008803">
    <property type="entry name" value="RHD3/Sey1"/>
</dbReference>
<dbReference type="InterPro" id="IPR046758">
    <property type="entry name" value="Sey1/RHD3-like_3HB"/>
</dbReference>
<dbReference type="PANTHER" id="PTHR45923">
    <property type="entry name" value="PROTEIN SEY1"/>
    <property type="match status" value="1"/>
</dbReference>
<dbReference type="PANTHER" id="PTHR45923:SF2">
    <property type="entry name" value="PROTEIN SEY1"/>
    <property type="match status" value="1"/>
</dbReference>
<dbReference type="Pfam" id="PF05879">
    <property type="entry name" value="RHD3_GTPase"/>
    <property type="match status" value="1"/>
</dbReference>
<dbReference type="Pfam" id="PF20428">
    <property type="entry name" value="Sey1_3HB"/>
    <property type="match status" value="1"/>
</dbReference>
<dbReference type="SUPFAM" id="SSF52540">
    <property type="entry name" value="P-loop containing nucleoside triphosphate hydrolases"/>
    <property type="match status" value="1"/>
</dbReference>
<dbReference type="PROSITE" id="PS51715">
    <property type="entry name" value="G_GB1_RHD3"/>
    <property type="match status" value="1"/>
</dbReference>
<sequence>MATNGHFASIGNSASDTTAYEHGVQVIDENKEFKNPNLSQYLSLENVTPSGFNYHLISVFGSQSTGKSTLLNHLFGTHFSVMSELERRQTTKGIWMSKNKNESSSMASNILVMDVEGTDGRERGEDQDFERKSALFALATSEVLIVNIWEHQVGLYQGANMGLLKTVFEVNLQLFLKDKNTTHRSLLFFVIRDYSGMTPLQNLQKTLMEDMARLWDSISKPGGLENSNVHDYFDFQFYGLPHKGYQPEKFVEETQKLSLRFCDGQRDPNLDARKGEFSDGGVFLPEYHRRIPADGFSRYAEGIWDQIVNNKDLDLPTQQELLAQFRCDEILREVMVAFDETIVPFEDKQSQAARLGEPEILGGLGAAMRSSRTKAVKAFESEASRYHKGVYQRKRAELESKADTRLKTLFQGQLNAAHKSGISEFSEAVTAAVKSGQKKGTGYDFAEIVNEEAKKAVDKFEEVARATVVDGTSWSDYKQELALYEKELAEVSARLRRDEMRRLASRVERWVQSRLGESVGLEFNALGSGRAGGGAPEKGDQPTEKKFWDRVWNVFVETVLDAERRFTDRASSFDASLEEVDVGLWRLRRKSWGVLRAKIDEEMIEGNLLLKLRENFEDKFRYDDAGVPRIWRPTDDIEGIYTRARESTLTLIPLLSKFRLDETSAPPPLDRWIGHTPSSATSADEEDLAPIGGVDEEEGKSLEEEMTIVSDAKRQELTVRFKKAADGVYVEAKRSAIGGMTQVPLYFYGLLLALGWNEIIAVLRNPAYFFLLFVCAVGAYITYQLNLWGPIIKMTEAASNQAVTEGKKRLREFLESSDTGRQAIAMSTPGGSGRGGEEHEMSRLNQQGKSAAADEDVDDL</sequence>
<feature type="chain" id="PRO_0000384973" description="Protein sey1">
    <location>
        <begin position="1"/>
        <end position="860"/>
    </location>
</feature>
<feature type="topological domain" description="Cytoplasmic" evidence="1">
    <location>
        <begin position="1"/>
        <end position="742"/>
    </location>
</feature>
<feature type="transmembrane region" description="Helical" evidence="1">
    <location>
        <begin position="743"/>
        <end position="763"/>
    </location>
</feature>
<feature type="topological domain" description="Lumenal" evidence="1">
    <location>
        <begin position="764"/>
        <end position="766"/>
    </location>
</feature>
<feature type="transmembrane region" description="Helical" evidence="1">
    <location>
        <begin position="767"/>
        <end position="787"/>
    </location>
</feature>
<feature type="topological domain" description="Cytoplasmic" evidence="1">
    <location>
        <begin position="788"/>
        <end position="860"/>
    </location>
</feature>
<feature type="domain" description="GB1/RHD3-type G" evidence="2">
    <location>
        <begin position="51"/>
        <end position="300"/>
    </location>
</feature>
<feature type="region of interest" description="Disordered" evidence="3">
    <location>
        <begin position="818"/>
        <end position="860"/>
    </location>
</feature>
<feature type="coiled-coil region" evidence="1">
    <location>
        <begin position="443"/>
        <end position="501"/>
    </location>
</feature>
<feature type="binding site" evidence="1">
    <location>
        <begin position="61"/>
        <end position="68"/>
    </location>
    <ligand>
        <name>GTP</name>
        <dbReference type="ChEBI" id="CHEBI:37565"/>
    </ligand>
</feature>
<reference key="1">
    <citation type="journal article" date="2005" name="Nature">
        <title>Genome sequencing and analysis of Aspergillus oryzae.</title>
        <authorList>
            <person name="Machida M."/>
            <person name="Asai K."/>
            <person name="Sano M."/>
            <person name="Tanaka T."/>
            <person name="Kumagai T."/>
            <person name="Terai G."/>
            <person name="Kusumoto K."/>
            <person name="Arima T."/>
            <person name="Akita O."/>
            <person name="Kashiwagi Y."/>
            <person name="Abe K."/>
            <person name="Gomi K."/>
            <person name="Horiuchi H."/>
            <person name="Kitamoto K."/>
            <person name="Kobayashi T."/>
            <person name="Takeuchi M."/>
            <person name="Denning D.W."/>
            <person name="Galagan J.E."/>
            <person name="Nierman W.C."/>
            <person name="Yu J."/>
            <person name="Archer D.B."/>
            <person name="Bennett J.W."/>
            <person name="Bhatnagar D."/>
            <person name="Cleveland T.E."/>
            <person name="Fedorova N.D."/>
            <person name="Gotoh O."/>
            <person name="Horikawa H."/>
            <person name="Hosoyama A."/>
            <person name="Ichinomiya M."/>
            <person name="Igarashi R."/>
            <person name="Iwashita K."/>
            <person name="Juvvadi P.R."/>
            <person name="Kato M."/>
            <person name="Kato Y."/>
            <person name="Kin T."/>
            <person name="Kokubun A."/>
            <person name="Maeda H."/>
            <person name="Maeyama N."/>
            <person name="Maruyama J."/>
            <person name="Nagasaki H."/>
            <person name="Nakajima T."/>
            <person name="Oda K."/>
            <person name="Okada K."/>
            <person name="Paulsen I."/>
            <person name="Sakamoto K."/>
            <person name="Sawano T."/>
            <person name="Takahashi M."/>
            <person name="Takase K."/>
            <person name="Terabayashi Y."/>
            <person name="Wortman J.R."/>
            <person name="Yamada O."/>
            <person name="Yamagata Y."/>
            <person name="Anazawa H."/>
            <person name="Hata Y."/>
            <person name="Koide Y."/>
            <person name="Komori T."/>
            <person name="Koyama Y."/>
            <person name="Minetoki T."/>
            <person name="Suharnan S."/>
            <person name="Tanaka A."/>
            <person name="Isono K."/>
            <person name="Kuhara S."/>
            <person name="Ogasawara N."/>
            <person name="Kikuchi H."/>
        </authorList>
    </citation>
    <scope>NUCLEOTIDE SEQUENCE [LARGE SCALE GENOMIC DNA]</scope>
    <source>
        <strain>ATCC 42149 / RIB 40</strain>
    </source>
</reference>
<accession>Q2UNK6</accession>
<gene>
    <name type="primary">sey1</name>
    <name type="ORF">AO090001000326</name>
</gene>
<name>SEY1_ASPOR</name>